<reference key="1">
    <citation type="journal article" date="2001" name="Science">
        <title>The genome of the natural genetic engineer Agrobacterium tumefaciens C58.</title>
        <authorList>
            <person name="Wood D.W."/>
            <person name="Setubal J.C."/>
            <person name="Kaul R."/>
            <person name="Monks D.E."/>
            <person name="Kitajima J.P."/>
            <person name="Okura V.K."/>
            <person name="Zhou Y."/>
            <person name="Chen L."/>
            <person name="Wood G.E."/>
            <person name="Almeida N.F. Jr."/>
            <person name="Woo L."/>
            <person name="Chen Y."/>
            <person name="Paulsen I.T."/>
            <person name="Eisen J.A."/>
            <person name="Karp P.D."/>
            <person name="Bovee D. Sr."/>
            <person name="Chapman P."/>
            <person name="Clendenning J."/>
            <person name="Deatherage G."/>
            <person name="Gillet W."/>
            <person name="Grant C."/>
            <person name="Kutyavin T."/>
            <person name="Levy R."/>
            <person name="Li M.-J."/>
            <person name="McClelland E."/>
            <person name="Palmieri A."/>
            <person name="Raymond C."/>
            <person name="Rouse G."/>
            <person name="Saenphimmachak C."/>
            <person name="Wu Z."/>
            <person name="Romero P."/>
            <person name="Gordon D."/>
            <person name="Zhang S."/>
            <person name="Yoo H."/>
            <person name="Tao Y."/>
            <person name="Biddle P."/>
            <person name="Jung M."/>
            <person name="Krespan W."/>
            <person name="Perry M."/>
            <person name="Gordon-Kamm B."/>
            <person name="Liao L."/>
            <person name="Kim S."/>
            <person name="Hendrick C."/>
            <person name="Zhao Z.-Y."/>
            <person name="Dolan M."/>
            <person name="Chumley F."/>
            <person name="Tingey S.V."/>
            <person name="Tomb J.-F."/>
            <person name="Gordon M.P."/>
            <person name="Olson M.V."/>
            <person name="Nester E.W."/>
        </authorList>
    </citation>
    <scope>NUCLEOTIDE SEQUENCE [LARGE SCALE GENOMIC DNA]</scope>
    <source>
        <strain>C58 / ATCC 33970</strain>
    </source>
</reference>
<reference key="2">
    <citation type="journal article" date="2001" name="Science">
        <title>Genome sequence of the plant pathogen and biotechnology agent Agrobacterium tumefaciens C58.</title>
        <authorList>
            <person name="Goodner B."/>
            <person name="Hinkle G."/>
            <person name="Gattung S."/>
            <person name="Miller N."/>
            <person name="Blanchard M."/>
            <person name="Qurollo B."/>
            <person name="Goldman B.S."/>
            <person name="Cao Y."/>
            <person name="Askenazi M."/>
            <person name="Halling C."/>
            <person name="Mullin L."/>
            <person name="Houmiel K."/>
            <person name="Gordon J."/>
            <person name="Vaudin M."/>
            <person name="Iartchouk O."/>
            <person name="Epp A."/>
            <person name="Liu F."/>
            <person name="Wollam C."/>
            <person name="Allinger M."/>
            <person name="Doughty D."/>
            <person name="Scott C."/>
            <person name="Lappas C."/>
            <person name="Markelz B."/>
            <person name="Flanagan C."/>
            <person name="Crowell C."/>
            <person name="Gurson J."/>
            <person name="Lomo C."/>
            <person name="Sear C."/>
            <person name="Strub G."/>
            <person name="Cielo C."/>
            <person name="Slater S."/>
        </authorList>
    </citation>
    <scope>NUCLEOTIDE SEQUENCE [LARGE SCALE GENOMIC DNA]</scope>
    <source>
        <strain>C58 / ATCC 33970</strain>
    </source>
</reference>
<proteinExistence type="inferred from homology"/>
<feature type="chain" id="PRO_0000177922" description="DNA mismatch repair protein MutL">
    <location>
        <begin position="1"/>
        <end position="606"/>
    </location>
</feature>
<feature type="region of interest" description="Disordered" evidence="2">
    <location>
        <begin position="340"/>
        <end position="366"/>
    </location>
</feature>
<feature type="compositionally biased region" description="Low complexity" evidence="2">
    <location>
        <begin position="353"/>
        <end position="366"/>
    </location>
</feature>
<protein>
    <recommendedName>
        <fullName evidence="1">DNA mismatch repair protein MutL</fullName>
    </recommendedName>
</protein>
<gene>
    <name evidence="1" type="primary">mutL</name>
    <name type="ordered locus">Atu0699</name>
    <name type="ORF">AGR_C_1260</name>
</gene>
<evidence type="ECO:0000255" key="1">
    <source>
        <dbReference type="HAMAP-Rule" id="MF_00149"/>
    </source>
</evidence>
<evidence type="ECO:0000256" key="2">
    <source>
        <dbReference type="SAM" id="MobiDB-lite"/>
    </source>
</evidence>
<comment type="function">
    <text evidence="1">This protein is involved in the repair of mismatches in DNA. It is required for dam-dependent methyl-directed DNA mismatch repair. May act as a 'molecular matchmaker', a protein that promotes the formation of a stable complex between two or more DNA-binding proteins in an ATP-dependent manner without itself being part of a final effector complex.</text>
</comment>
<comment type="similarity">
    <text evidence="1">Belongs to the DNA mismatch repair MutL/HexB family.</text>
</comment>
<sequence>MAIKQLSETLINQIAAGEVIERPSSATKELVENAIDAGATRIEIATAGGGKGLVRITDNGSGMSPADLELAVRRHCTSKISTTLDDIRTLGFRGEALPSIGSVAKLTITSRQQGAEQGSVISVTGGKVSDVRPAASNAGTIVEVRDLFFATPARLKFLKTERAEAAAITEVVKRMAIAFPHIRFVLSGTDRSTLEIPSTGDDHLARMAQILGAEFKDNAIEIDAGREDVTLTGFAGVPTFNRGNSSHQYVFVNGRPVQDKLLLSAIRGAYAETVPHGRYPVAVLSITLDPAFVDVNVHPAKSDVRFRDPGLIRGLIVGAIRQALTRDGDRAATTGASQMMNAFRPGYSPSGLRPSPSATWSAATSPSRPLAVSGDMQFAEAAQSRFSDITMPTARAEPREAYEASQSPSPEPVLYPLGAARAQLHENYIIAQTENGLVIVDQHAAHERLVFEEMRNALHSRRPPSQVLLIPEIIDLPEEDCDRLMDHAAGFDALGLVIERFGPGAIAVRETPAMLGEVNVQGLVRQLADEIAEWDAASTLANKLEYVAATMACHGSVRSGRRMRPEEMNALLRQMENTPGSGQCNHGRPTYIELKLSDIERLFGRS</sequence>
<name>MUTL_AGRFC</name>
<accession>Q8UHI3</accession>
<keyword id="KW-0227">DNA damage</keyword>
<keyword id="KW-0234">DNA repair</keyword>
<keyword id="KW-1185">Reference proteome</keyword>
<dbReference type="EMBL" id="AE007869">
    <property type="protein sequence ID" value="AAK86509.2"/>
    <property type="molecule type" value="Genomic_DNA"/>
</dbReference>
<dbReference type="PIR" id="AE2662">
    <property type="entry name" value="AE2662"/>
</dbReference>
<dbReference type="PIR" id="D97444">
    <property type="entry name" value="D97444"/>
</dbReference>
<dbReference type="RefSeq" id="NP_353724.2">
    <property type="nucleotide sequence ID" value="NC_003062.2"/>
</dbReference>
<dbReference type="RefSeq" id="WP_006313182.1">
    <property type="nucleotide sequence ID" value="NC_003062.2"/>
</dbReference>
<dbReference type="SMR" id="Q8UHI3"/>
<dbReference type="STRING" id="176299.Atu0699"/>
<dbReference type="EnsemblBacteria" id="AAK86509">
    <property type="protein sequence ID" value="AAK86509"/>
    <property type="gene ID" value="Atu0699"/>
</dbReference>
<dbReference type="GeneID" id="1132737"/>
<dbReference type="KEGG" id="atu:Atu0699"/>
<dbReference type="PATRIC" id="fig|176299.10.peg.696"/>
<dbReference type="eggNOG" id="COG0323">
    <property type="taxonomic scope" value="Bacteria"/>
</dbReference>
<dbReference type="HOGENOM" id="CLU_004131_4_2_5"/>
<dbReference type="OrthoDB" id="9763467at2"/>
<dbReference type="PhylomeDB" id="Q8UHI3"/>
<dbReference type="Proteomes" id="UP000000813">
    <property type="component" value="Chromosome circular"/>
</dbReference>
<dbReference type="GO" id="GO:0032300">
    <property type="term" value="C:mismatch repair complex"/>
    <property type="evidence" value="ECO:0007669"/>
    <property type="project" value="InterPro"/>
</dbReference>
<dbReference type="GO" id="GO:0005524">
    <property type="term" value="F:ATP binding"/>
    <property type="evidence" value="ECO:0007669"/>
    <property type="project" value="InterPro"/>
</dbReference>
<dbReference type="GO" id="GO:0016887">
    <property type="term" value="F:ATP hydrolysis activity"/>
    <property type="evidence" value="ECO:0007669"/>
    <property type="project" value="InterPro"/>
</dbReference>
<dbReference type="GO" id="GO:0140664">
    <property type="term" value="F:ATP-dependent DNA damage sensor activity"/>
    <property type="evidence" value="ECO:0007669"/>
    <property type="project" value="InterPro"/>
</dbReference>
<dbReference type="GO" id="GO:0030983">
    <property type="term" value="F:mismatched DNA binding"/>
    <property type="evidence" value="ECO:0007669"/>
    <property type="project" value="InterPro"/>
</dbReference>
<dbReference type="GO" id="GO:0006298">
    <property type="term" value="P:mismatch repair"/>
    <property type="evidence" value="ECO:0007669"/>
    <property type="project" value="UniProtKB-UniRule"/>
</dbReference>
<dbReference type="CDD" id="cd16926">
    <property type="entry name" value="HATPase_MutL-MLH-PMS-like"/>
    <property type="match status" value="1"/>
</dbReference>
<dbReference type="CDD" id="cd00782">
    <property type="entry name" value="MutL_Trans"/>
    <property type="match status" value="1"/>
</dbReference>
<dbReference type="FunFam" id="3.30.565.10:FF:000003">
    <property type="entry name" value="DNA mismatch repair endonuclease MutL"/>
    <property type="match status" value="1"/>
</dbReference>
<dbReference type="Gene3D" id="3.30.230.10">
    <property type="match status" value="1"/>
</dbReference>
<dbReference type="Gene3D" id="3.30.565.10">
    <property type="entry name" value="Histidine kinase-like ATPase, C-terminal domain"/>
    <property type="match status" value="1"/>
</dbReference>
<dbReference type="Gene3D" id="3.30.1540.20">
    <property type="entry name" value="MutL, C-terminal domain, dimerisation subdomain"/>
    <property type="match status" value="1"/>
</dbReference>
<dbReference type="Gene3D" id="3.30.1370.100">
    <property type="entry name" value="MutL, C-terminal domain, regulatory subdomain"/>
    <property type="match status" value="1"/>
</dbReference>
<dbReference type="HAMAP" id="MF_00149">
    <property type="entry name" value="DNA_mis_repair"/>
    <property type="match status" value="1"/>
</dbReference>
<dbReference type="InterPro" id="IPR014762">
    <property type="entry name" value="DNA_mismatch_repair_CS"/>
</dbReference>
<dbReference type="InterPro" id="IPR020667">
    <property type="entry name" value="DNA_mismatch_repair_MutL"/>
</dbReference>
<dbReference type="InterPro" id="IPR013507">
    <property type="entry name" value="DNA_mismatch_S5_2-like"/>
</dbReference>
<dbReference type="InterPro" id="IPR036890">
    <property type="entry name" value="HATPase_C_sf"/>
</dbReference>
<dbReference type="InterPro" id="IPR002099">
    <property type="entry name" value="MutL/Mlh/PMS"/>
</dbReference>
<dbReference type="InterPro" id="IPR038973">
    <property type="entry name" value="MutL/Mlh/Pms-like"/>
</dbReference>
<dbReference type="InterPro" id="IPR014790">
    <property type="entry name" value="MutL_C"/>
</dbReference>
<dbReference type="InterPro" id="IPR042120">
    <property type="entry name" value="MutL_C_dimsub"/>
</dbReference>
<dbReference type="InterPro" id="IPR042121">
    <property type="entry name" value="MutL_C_regsub"/>
</dbReference>
<dbReference type="InterPro" id="IPR037198">
    <property type="entry name" value="MutL_C_sf"/>
</dbReference>
<dbReference type="InterPro" id="IPR020568">
    <property type="entry name" value="Ribosomal_Su5_D2-typ_SF"/>
</dbReference>
<dbReference type="InterPro" id="IPR014721">
    <property type="entry name" value="Ribsml_uS5_D2-typ_fold_subgr"/>
</dbReference>
<dbReference type="NCBIfam" id="TIGR00585">
    <property type="entry name" value="mutl"/>
    <property type="match status" value="1"/>
</dbReference>
<dbReference type="NCBIfam" id="NF000953">
    <property type="entry name" value="PRK00095.2-4"/>
    <property type="match status" value="1"/>
</dbReference>
<dbReference type="PANTHER" id="PTHR10073">
    <property type="entry name" value="DNA MISMATCH REPAIR PROTEIN MLH, PMS, MUTL"/>
    <property type="match status" value="1"/>
</dbReference>
<dbReference type="PANTHER" id="PTHR10073:SF12">
    <property type="entry name" value="DNA MISMATCH REPAIR PROTEIN MLH1"/>
    <property type="match status" value="1"/>
</dbReference>
<dbReference type="Pfam" id="PF01119">
    <property type="entry name" value="DNA_mis_repair"/>
    <property type="match status" value="1"/>
</dbReference>
<dbReference type="Pfam" id="PF13589">
    <property type="entry name" value="HATPase_c_3"/>
    <property type="match status" value="1"/>
</dbReference>
<dbReference type="Pfam" id="PF08676">
    <property type="entry name" value="MutL_C"/>
    <property type="match status" value="1"/>
</dbReference>
<dbReference type="SMART" id="SM01340">
    <property type="entry name" value="DNA_mis_repair"/>
    <property type="match status" value="1"/>
</dbReference>
<dbReference type="SMART" id="SM00853">
    <property type="entry name" value="MutL_C"/>
    <property type="match status" value="1"/>
</dbReference>
<dbReference type="SUPFAM" id="SSF55874">
    <property type="entry name" value="ATPase domain of HSP90 chaperone/DNA topoisomerase II/histidine kinase"/>
    <property type="match status" value="1"/>
</dbReference>
<dbReference type="SUPFAM" id="SSF118116">
    <property type="entry name" value="DNA mismatch repair protein MutL"/>
    <property type="match status" value="1"/>
</dbReference>
<dbReference type="SUPFAM" id="SSF54211">
    <property type="entry name" value="Ribosomal protein S5 domain 2-like"/>
    <property type="match status" value="1"/>
</dbReference>
<dbReference type="PROSITE" id="PS00058">
    <property type="entry name" value="DNA_MISMATCH_REPAIR_1"/>
    <property type="match status" value="1"/>
</dbReference>
<organism>
    <name type="scientific">Agrobacterium fabrum (strain C58 / ATCC 33970)</name>
    <name type="common">Agrobacterium tumefaciens (strain C58)</name>
    <dbReference type="NCBI Taxonomy" id="176299"/>
    <lineage>
        <taxon>Bacteria</taxon>
        <taxon>Pseudomonadati</taxon>
        <taxon>Pseudomonadota</taxon>
        <taxon>Alphaproteobacteria</taxon>
        <taxon>Hyphomicrobiales</taxon>
        <taxon>Rhizobiaceae</taxon>
        <taxon>Rhizobium/Agrobacterium group</taxon>
        <taxon>Agrobacterium</taxon>
        <taxon>Agrobacterium tumefaciens complex</taxon>
    </lineage>
</organism>